<protein>
    <recommendedName>
        <fullName>Biotinylated protein TB7.3 homolog</fullName>
    </recommendedName>
</protein>
<dbReference type="EMBL" id="AL583919">
    <property type="protein sequence ID" value="CAC30312.1"/>
    <property type="status" value="ALT_INIT"/>
    <property type="molecule type" value="Genomic_DNA"/>
</dbReference>
<dbReference type="PIR" id="D87009">
    <property type="entry name" value="D87009"/>
</dbReference>
<dbReference type="RefSeq" id="WP_041323723.1">
    <property type="nucleotide sequence ID" value="NC_002677.1"/>
</dbReference>
<dbReference type="SMR" id="Q9CCH9"/>
<dbReference type="STRING" id="272631.gene:17574627"/>
<dbReference type="KEGG" id="mle:ML0802"/>
<dbReference type="Leproma" id="ML0802"/>
<dbReference type="eggNOG" id="COG1038">
    <property type="taxonomic scope" value="Bacteria"/>
</dbReference>
<dbReference type="HOGENOM" id="CLU_016733_9_1_11"/>
<dbReference type="Proteomes" id="UP000000806">
    <property type="component" value="Chromosome"/>
</dbReference>
<dbReference type="CDD" id="cd06850">
    <property type="entry name" value="biotinyl_domain"/>
    <property type="match status" value="1"/>
</dbReference>
<dbReference type="Gene3D" id="2.40.50.100">
    <property type="match status" value="1"/>
</dbReference>
<dbReference type="InterPro" id="IPR050709">
    <property type="entry name" value="Biotin_Carboxyl_Carrier/Decarb"/>
</dbReference>
<dbReference type="InterPro" id="IPR000089">
    <property type="entry name" value="Biotin_lipoyl"/>
</dbReference>
<dbReference type="InterPro" id="IPR011053">
    <property type="entry name" value="Single_hybrid_motif"/>
</dbReference>
<dbReference type="NCBIfam" id="NF004547">
    <property type="entry name" value="PRK05889.1"/>
    <property type="match status" value="1"/>
</dbReference>
<dbReference type="PANTHER" id="PTHR45266">
    <property type="entry name" value="OXALOACETATE DECARBOXYLASE ALPHA CHAIN"/>
    <property type="match status" value="1"/>
</dbReference>
<dbReference type="PANTHER" id="PTHR45266:SF3">
    <property type="entry name" value="OXALOACETATE DECARBOXYLASE ALPHA CHAIN"/>
    <property type="match status" value="1"/>
</dbReference>
<dbReference type="Pfam" id="PF00364">
    <property type="entry name" value="Biotin_lipoyl"/>
    <property type="match status" value="1"/>
</dbReference>
<dbReference type="SUPFAM" id="SSF51230">
    <property type="entry name" value="Single hybrid motif"/>
    <property type="match status" value="1"/>
</dbReference>
<dbReference type="PROSITE" id="PS50968">
    <property type="entry name" value="BIOTINYL_LIPOYL"/>
    <property type="match status" value="1"/>
</dbReference>
<comment type="sequence caution" evidence="3">
    <conflict type="erroneous initiation">
        <sequence resource="EMBL-CDS" id="CAC30312"/>
    </conflict>
</comment>
<evidence type="ECO:0000250" key="1"/>
<evidence type="ECO:0000255" key="2">
    <source>
        <dbReference type="PROSITE-ProRule" id="PRU01066"/>
    </source>
</evidence>
<evidence type="ECO:0000305" key="3"/>
<organism>
    <name type="scientific">Mycobacterium leprae (strain TN)</name>
    <dbReference type="NCBI Taxonomy" id="272631"/>
    <lineage>
        <taxon>Bacteria</taxon>
        <taxon>Bacillati</taxon>
        <taxon>Actinomycetota</taxon>
        <taxon>Actinomycetes</taxon>
        <taxon>Mycobacteriales</taxon>
        <taxon>Mycobacteriaceae</taxon>
        <taxon>Mycobacterium</taxon>
    </lineage>
</organism>
<sequence>MAEDVRAEIVASVLEVVVSEGDQIGKGDVLVLLESMKMEIPVLAGVAGIVSKVSVSVGDVIQAGDLIAVIS</sequence>
<feature type="initiator methionine" description="Removed" evidence="1">
    <location>
        <position position="1"/>
    </location>
</feature>
<feature type="chain" id="PRO_0000146836" description="Biotinylated protein TB7.3 homolog">
    <location>
        <begin position="2"/>
        <end position="71"/>
    </location>
</feature>
<feature type="domain" description="Biotinyl-binding" evidence="2">
    <location>
        <begin position="2"/>
        <end position="71"/>
    </location>
</feature>
<feature type="modified residue" description="N6-biotinyllysine" evidence="1 2">
    <location>
        <position position="37"/>
    </location>
</feature>
<accession>Q9CCH9</accession>
<proteinExistence type="inferred from homology"/>
<gene>
    <name type="ordered locus">ML0802</name>
</gene>
<reference key="1">
    <citation type="journal article" date="2001" name="Nature">
        <title>Massive gene decay in the leprosy bacillus.</title>
        <authorList>
            <person name="Cole S.T."/>
            <person name="Eiglmeier K."/>
            <person name="Parkhill J."/>
            <person name="James K.D."/>
            <person name="Thomson N.R."/>
            <person name="Wheeler P.R."/>
            <person name="Honore N."/>
            <person name="Garnier T."/>
            <person name="Churcher C.M."/>
            <person name="Harris D.E."/>
            <person name="Mungall K.L."/>
            <person name="Basham D."/>
            <person name="Brown D."/>
            <person name="Chillingworth T."/>
            <person name="Connor R."/>
            <person name="Davies R.M."/>
            <person name="Devlin K."/>
            <person name="Duthoy S."/>
            <person name="Feltwell T."/>
            <person name="Fraser A."/>
            <person name="Hamlin N."/>
            <person name="Holroyd S."/>
            <person name="Hornsby T."/>
            <person name="Jagels K."/>
            <person name="Lacroix C."/>
            <person name="Maclean J."/>
            <person name="Moule S."/>
            <person name="Murphy L.D."/>
            <person name="Oliver K."/>
            <person name="Quail M.A."/>
            <person name="Rajandream M.A."/>
            <person name="Rutherford K.M."/>
            <person name="Rutter S."/>
            <person name="Seeger K."/>
            <person name="Simon S."/>
            <person name="Simmonds M."/>
            <person name="Skelton J."/>
            <person name="Squares R."/>
            <person name="Squares S."/>
            <person name="Stevens K."/>
            <person name="Taylor K."/>
            <person name="Whitehead S."/>
            <person name="Woodward J.R."/>
            <person name="Barrell B.G."/>
        </authorList>
    </citation>
    <scope>NUCLEOTIDE SEQUENCE [LARGE SCALE GENOMIC DNA]</scope>
    <source>
        <strain>TN</strain>
    </source>
</reference>
<name>BTB7_MYCLE</name>
<keyword id="KW-0092">Biotin</keyword>
<keyword id="KW-1185">Reference proteome</keyword>